<accession>Q5R4Q6</accession>
<accession>Q9N2F2</accession>
<feature type="chain" id="PRO_0000068950" description="5-hydroxytryptamine receptor 2A">
    <location>
        <begin position="1"/>
        <end position="471"/>
    </location>
</feature>
<feature type="topological domain" description="Extracellular" evidence="2">
    <location>
        <begin position="1"/>
        <end position="80"/>
    </location>
</feature>
<feature type="transmembrane region" description="Helical; Name=1" evidence="2">
    <location>
        <begin position="81"/>
        <end position="97"/>
    </location>
</feature>
<feature type="topological domain" description="Cytoplasmic" evidence="2">
    <location>
        <begin position="98"/>
        <end position="111"/>
    </location>
</feature>
<feature type="transmembrane region" description="Helical; Name=2" evidence="2">
    <location>
        <begin position="112"/>
        <end position="137"/>
    </location>
</feature>
<feature type="topological domain" description="Extracellular" evidence="2">
    <location>
        <begin position="138"/>
        <end position="146"/>
    </location>
</feature>
<feature type="transmembrane region" description="Helical; Name=3" evidence="2">
    <location>
        <begin position="147"/>
        <end position="171"/>
    </location>
</feature>
<feature type="topological domain" description="Cytoplasmic" evidence="2">
    <location>
        <begin position="172"/>
        <end position="191"/>
    </location>
</feature>
<feature type="transmembrane region" description="Helical; Name=4" evidence="2">
    <location>
        <begin position="192"/>
        <end position="215"/>
    </location>
</feature>
<feature type="topological domain" description="Extracellular" evidence="2">
    <location>
        <begin position="216"/>
        <end position="232"/>
    </location>
</feature>
<feature type="transmembrane region" description="Helical; Name=5" evidence="2">
    <location>
        <begin position="233"/>
        <end position="258"/>
    </location>
</feature>
<feature type="topological domain" description="Cytoplasmic" evidence="2">
    <location>
        <begin position="259"/>
        <end position="322"/>
    </location>
</feature>
<feature type="transmembrane region" description="Helical; Name=6" evidence="2">
    <location>
        <begin position="323"/>
        <end position="348"/>
    </location>
</feature>
<feature type="topological domain" description="Extracellular" evidence="2">
    <location>
        <begin position="349"/>
        <end position="356"/>
    </location>
</feature>
<feature type="transmembrane region" description="Helical; Name=7" evidence="2">
    <location>
        <begin position="357"/>
        <end position="382"/>
    </location>
</feature>
<feature type="topological domain" description="Cytoplasmic" evidence="2">
    <location>
        <begin position="383"/>
        <end position="471"/>
    </location>
</feature>
<feature type="region of interest" description="Disordered" evidence="7">
    <location>
        <begin position="450"/>
        <end position="471"/>
    </location>
</feature>
<feature type="short sequence motif" description="DRY motif; important for ligand-induced conformation changes" evidence="4">
    <location>
        <begin position="172"/>
        <end position="174"/>
    </location>
</feature>
<feature type="short sequence motif" description="NPxxY motif; important for ligand-induced conformation changes and signaling" evidence="4">
    <location>
        <begin position="376"/>
        <end position="380"/>
    </location>
</feature>
<feature type="short sequence motif" description="PDZ-binding" evidence="2">
    <location>
        <begin position="469"/>
        <end position="471"/>
    </location>
</feature>
<feature type="compositionally biased region" description="Basic and acidic residues" evidence="7">
    <location>
        <begin position="451"/>
        <end position="465"/>
    </location>
</feature>
<feature type="binding site" evidence="2">
    <location>
        <position position="155"/>
    </location>
    <ligand>
        <name>serotonin</name>
        <dbReference type="ChEBI" id="CHEBI:350546"/>
    </ligand>
</feature>
<feature type="binding site" evidence="2">
    <location>
        <position position="343"/>
    </location>
    <ligand>
        <name>serotonin</name>
        <dbReference type="ChEBI" id="CHEBI:350546"/>
    </ligand>
</feature>
<feature type="site" description="Hydrophobic barrier that decreases the speed of ligand binding and dissociation" evidence="2">
    <location>
        <position position="229"/>
    </location>
</feature>
<feature type="modified residue" description="Phosphoserine" evidence="2">
    <location>
        <position position="280"/>
    </location>
</feature>
<feature type="glycosylation site" description="N-linked (GlcNAc...) asparagine" evidence="5">
    <location>
        <position position="38"/>
    </location>
</feature>
<feature type="disulfide bond" evidence="6">
    <location>
        <begin position="148"/>
        <end position="227"/>
    </location>
</feature>
<feature type="disulfide bond" evidence="6">
    <location>
        <begin position="349"/>
        <end position="353"/>
    </location>
</feature>
<feature type="sequence conflict" description="In Ref. 2; BAA90436." evidence="8" ref="2">
    <original>S</original>
    <variation>F</variation>
    <location>
        <position position="330"/>
    </location>
</feature>
<evidence type="ECO:0000250" key="1">
    <source>
        <dbReference type="UniProtKB" id="P14842"/>
    </source>
</evidence>
<evidence type="ECO:0000250" key="2">
    <source>
        <dbReference type="UniProtKB" id="P28223"/>
    </source>
</evidence>
<evidence type="ECO:0000250" key="3">
    <source>
        <dbReference type="UniProtKB" id="P35363"/>
    </source>
</evidence>
<evidence type="ECO:0000250" key="4">
    <source>
        <dbReference type="UniProtKB" id="P41595"/>
    </source>
</evidence>
<evidence type="ECO:0000255" key="5"/>
<evidence type="ECO:0000255" key="6">
    <source>
        <dbReference type="PROSITE-ProRule" id="PRU00521"/>
    </source>
</evidence>
<evidence type="ECO:0000256" key="7">
    <source>
        <dbReference type="SAM" id="MobiDB-lite"/>
    </source>
</evidence>
<evidence type="ECO:0000305" key="8"/>
<protein>
    <recommendedName>
        <fullName>5-hydroxytryptamine receptor 2A</fullName>
        <shortName>5-HT-2</shortName>
        <shortName>5-HT-2A</shortName>
    </recommendedName>
    <alternativeName>
        <fullName>Serotonin receptor 2A</fullName>
    </alternativeName>
</protein>
<dbReference type="EMBL" id="CR861189">
    <property type="protein sequence ID" value="CAH93260.1"/>
    <property type="molecule type" value="mRNA"/>
</dbReference>
<dbReference type="EMBL" id="AB037516">
    <property type="protein sequence ID" value="BAA90436.1"/>
    <property type="molecule type" value="Genomic_DNA"/>
</dbReference>
<dbReference type="SMR" id="Q5R4Q6"/>
<dbReference type="GlyCosmos" id="Q5R4Q6">
    <property type="glycosylation" value="1 site, No reported glycans"/>
</dbReference>
<dbReference type="KEGG" id="pon:100173935"/>
<dbReference type="GO" id="GO:0030424">
    <property type="term" value="C:axon"/>
    <property type="evidence" value="ECO:0007669"/>
    <property type="project" value="UniProtKB-SubCell"/>
</dbReference>
<dbReference type="GO" id="GO:0005901">
    <property type="term" value="C:caveola"/>
    <property type="evidence" value="ECO:0007669"/>
    <property type="project" value="UniProtKB-SubCell"/>
</dbReference>
<dbReference type="GO" id="GO:0031410">
    <property type="term" value="C:cytoplasmic vesicle"/>
    <property type="evidence" value="ECO:0007669"/>
    <property type="project" value="UniProtKB-KW"/>
</dbReference>
<dbReference type="GO" id="GO:0030425">
    <property type="term" value="C:dendrite"/>
    <property type="evidence" value="ECO:0007669"/>
    <property type="project" value="UniProtKB-SubCell"/>
</dbReference>
<dbReference type="GO" id="GO:0098793">
    <property type="term" value="C:presynapse"/>
    <property type="evidence" value="ECO:0007669"/>
    <property type="project" value="UniProtKB-SubCell"/>
</dbReference>
<dbReference type="GO" id="GO:0004993">
    <property type="term" value="F:G protein-coupled serotonin receptor activity"/>
    <property type="evidence" value="ECO:0007669"/>
    <property type="project" value="InterPro"/>
</dbReference>
<dbReference type="GO" id="GO:0030594">
    <property type="term" value="F:neurotransmitter receptor activity"/>
    <property type="evidence" value="ECO:0007669"/>
    <property type="project" value="TreeGrafter"/>
</dbReference>
<dbReference type="GO" id="GO:0099589">
    <property type="term" value="F:serotonin receptor activity"/>
    <property type="evidence" value="ECO:0007669"/>
    <property type="project" value="UniProtKB-ARBA"/>
</dbReference>
<dbReference type="GO" id="GO:0007268">
    <property type="term" value="P:chemical synaptic transmission"/>
    <property type="evidence" value="ECO:0007669"/>
    <property type="project" value="TreeGrafter"/>
</dbReference>
<dbReference type="GO" id="GO:0007187">
    <property type="term" value="P:G protein-coupled receptor signaling pathway, coupled to cyclic nucleotide second messenger"/>
    <property type="evidence" value="ECO:0007669"/>
    <property type="project" value="TreeGrafter"/>
</dbReference>
<dbReference type="GO" id="GO:0007208">
    <property type="term" value="P:phospholipase C-activating serotonin receptor signaling pathway"/>
    <property type="evidence" value="ECO:0007669"/>
    <property type="project" value="TreeGrafter"/>
</dbReference>
<dbReference type="GO" id="GO:0051209">
    <property type="term" value="P:release of sequestered calcium ion into cytosol"/>
    <property type="evidence" value="ECO:0007669"/>
    <property type="project" value="TreeGrafter"/>
</dbReference>
<dbReference type="GO" id="GO:0009410">
    <property type="term" value="P:response to xenobiotic stimulus"/>
    <property type="evidence" value="ECO:0007669"/>
    <property type="project" value="TreeGrafter"/>
</dbReference>
<dbReference type="GO" id="GO:0007210">
    <property type="term" value="P:serotonin receptor signaling pathway"/>
    <property type="evidence" value="ECO:0007669"/>
    <property type="project" value="TreeGrafter"/>
</dbReference>
<dbReference type="CDD" id="cd15304">
    <property type="entry name" value="7tmA_5-HT2A"/>
    <property type="match status" value="1"/>
</dbReference>
<dbReference type="Gene3D" id="1.20.1070.10">
    <property type="entry name" value="Rhodopsin 7-helix transmembrane proteins"/>
    <property type="match status" value="1"/>
</dbReference>
<dbReference type="InterPro" id="IPR000455">
    <property type="entry name" value="5HT2A_rcpt"/>
</dbReference>
<dbReference type="InterPro" id="IPR002231">
    <property type="entry name" value="5HT_rcpt"/>
</dbReference>
<dbReference type="InterPro" id="IPR000276">
    <property type="entry name" value="GPCR_Rhodpsn"/>
</dbReference>
<dbReference type="InterPro" id="IPR017452">
    <property type="entry name" value="GPCR_Rhodpsn_7TM"/>
</dbReference>
<dbReference type="PANTHER" id="PTHR24247">
    <property type="entry name" value="5-HYDROXYTRYPTAMINE RECEPTOR"/>
    <property type="match status" value="1"/>
</dbReference>
<dbReference type="PANTHER" id="PTHR24247:SF30">
    <property type="entry name" value="5-HYDROXYTRYPTAMINE RECEPTOR 2A"/>
    <property type="match status" value="1"/>
</dbReference>
<dbReference type="Pfam" id="PF00001">
    <property type="entry name" value="7tm_1"/>
    <property type="match status" value="1"/>
</dbReference>
<dbReference type="PRINTS" id="PR00516">
    <property type="entry name" value="5HT2ARECEPTR"/>
</dbReference>
<dbReference type="PRINTS" id="PR01101">
    <property type="entry name" value="5HTRECEPTOR"/>
</dbReference>
<dbReference type="PRINTS" id="PR00237">
    <property type="entry name" value="GPCRRHODOPSN"/>
</dbReference>
<dbReference type="SMART" id="SM01381">
    <property type="entry name" value="7TM_GPCR_Srsx"/>
    <property type="match status" value="1"/>
</dbReference>
<dbReference type="SUPFAM" id="SSF81321">
    <property type="entry name" value="Family A G protein-coupled receptor-like"/>
    <property type="match status" value="1"/>
</dbReference>
<dbReference type="PROSITE" id="PS00237">
    <property type="entry name" value="G_PROTEIN_RECEP_F1_1"/>
    <property type="match status" value="1"/>
</dbReference>
<dbReference type="PROSITE" id="PS50262">
    <property type="entry name" value="G_PROTEIN_RECEP_F1_2"/>
    <property type="match status" value="1"/>
</dbReference>
<name>5HT2A_PONPY</name>
<gene>
    <name type="primary">HTR2A</name>
</gene>
<keyword id="KW-0085">Behavior</keyword>
<keyword id="KW-1003">Cell membrane</keyword>
<keyword id="KW-0966">Cell projection</keyword>
<keyword id="KW-0968">Cytoplasmic vesicle</keyword>
<keyword id="KW-1015">Disulfide bond</keyword>
<keyword id="KW-0297">G-protein coupled receptor</keyword>
<keyword id="KW-0325">Glycoprotein</keyword>
<keyword id="KW-0472">Membrane</keyword>
<keyword id="KW-0597">Phosphoprotein</keyword>
<keyword id="KW-0675">Receptor</keyword>
<keyword id="KW-0770">Synapse</keyword>
<keyword id="KW-0807">Transducer</keyword>
<keyword id="KW-0812">Transmembrane</keyword>
<keyword id="KW-1133">Transmembrane helix</keyword>
<organism>
    <name type="scientific">Pongo pygmaeus</name>
    <name type="common">Bornean orangutan</name>
    <dbReference type="NCBI Taxonomy" id="9600"/>
    <lineage>
        <taxon>Eukaryota</taxon>
        <taxon>Metazoa</taxon>
        <taxon>Chordata</taxon>
        <taxon>Craniata</taxon>
        <taxon>Vertebrata</taxon>
        <taxon>Euteleostomi</taxon>
        <taxon>Mammalia</taxon>
        <taxon>Eutheria</taxon>
        <taxon>Euarchontoglires</taxon>
        <taxon>Primates</taxon>
        <taxon>Haplorrhini</taxon>
        <taxon>Catarrhini</taxon>
        <taxon>Hominidae</taxon>
        <taxon>Pongo</taxon>
    </lineage>
</organism>
<proteinExistence type="evidence at transcript level"/>
<comment type="function">
    <text evidence="2 3">G-protein coupled receptor for 5-hydroxytryptamine (serotonin). Also functions as a receptor for various drugs and psychoactive substances, including mescaline, psilocybin, 1-(2,5-dimethoxy-4-iodophenyl)-2-aminopropane (DOI) and lysergic acid diethylamide (LSD). Ligand binding causes a conformation change that triggers signaling via guanine nucleotide-binding proteins (G proteins) and modulates the activity of downstream effectors. HTR2A is coupled to G(q)/G(11) G alpha proteins and activates phospholipase C-beta, releasing diacylglycerol (DAG) and inositol 1,4,5-trisphosphate (IP3) second messengers that modulate the activity of phosphatidylinositol 3-kinase and promote the release of Ca(2+) ions from intracellular stores, respectively. Beta-arrestin family members inhibit signaling via G proteins and mediate activation of alternative signaling pathways. Affects neural activity, perception, cognition and mood (By similarity). Plays a role in the regulation of behavior, including responses to anxiogenic situations and psychoactive substances. Plays a role in intestinal smooth muscle contraction, and may play a role in arterial vasoconstriction (By similarity).</text>
</comment>
<comment type="activity regulation">
    <text evidence="2">G-protein coupled receptor activity is regulated by lipids: oleamide increases HTR2A-mediated activity.</text>
</comment>
<comment type="subunit">
    <text evidence="2">Interacts (via C-terminus) with MPDZ and PATJ. May interact (via C-terminus) with MPP3, PRDX6, DLG4, DLG1, CASK, APBA1 and MAGI2. Interacts with GRM2 and DRD2; this may affect signaling.</text>
</comment>
<comment type="subcellular location">
    <subcellularLocation>
        <location evidence="2">Cell membrane</location>
        <topology evidence="2">Multi-pass membrane protein</topology>
    </subcellularLocation>
    <subcellularLocation>
        <location evidence="3">Cell projection</location>
        <location evidence="3">Dendrite</location>
    </subcellularLocation>
    <subcellularLocation>
        <location evidence="1">Cell projection</location>
        <location evidence="1">Axon</location>
    </subcellularLocation>
    <subcellularLocation>
        <location evidence="1">Cytoplasmic vesicle</location>
    </subcellularLocation>
    <subcellularLocation>
        <location evidence="1">Membrane</location>
        <location evidence="1">Caveola</location>
    </subcellularLocation>
    <subcellularLocation>
        <location evidence="1">Presynapse</location>
    </subcellularLocation>
</comment>
<comment type="domain">
    <text evidence="2">The PDZ domain-binding motif is involved in the interaction with PATJ, CASK, APBA1, DLG1 and DLG4.</text>
</comment>
<comment type="similarity">
    <text evidence="6">Belongs to the G-protein coupled receptor 1 family.</text>
</comment>
<reference key="1">
    <citation type="submission" date="2004-11" db="EMBL/GenBank/DDBJ databases">
        <authorList>
            <consortium name="The German cDNA consortium"/>
        </authorList>
    </citation>
    <scope>NUCLEOTIDE SEQUENCE [LARGE SCALE MRNA]</scope>
    <source>
        <tissue>Brain cortex</tissue>
    </source>
</reference>
<reference key="2">
    <citation type="journal article" date="2004" name="Mol. Biol. Evol.">
        <title>Human-specific amino acid changes found in 103 protein-coding genes.</title>
        <authorList>
            <person name="Kitano T."/>
            <person name="Liu Y.-H."/>
            <person name="Ueda S."/>
            <person name="Saitou N."/>
        </authorList>
    </citation>
    <scope>NUCLEOTIDE SEQUENCE [GENOMIC DNA] OF 216-460</scope>
    <source>
        <strain>Isolate oran-U1</strain>
    </source>
</reference>
<sequence length="471" mass="52529">MDILCEENTSLSSTTNSLMQLNDDTRLYSNDFNSGEANTSDAFNWTVDSENRTNLSCEGCLSPSCLSLLHLQEKNWSALLTAVVIILTIAGNILVIMAVSLEKKLQNATNYFLMSLAIADMLLGFLVMPVSMLTILYGYRWPLPSKLCAVWIYLDVLFSTASIMHLCAISLDRYVAIQNPIHHSRFNSRTKAFLKIIAVWTISVGISMPIPVFGLQDDSKVFKEGSCLLADDNFVLIGSFVSFFIPLTIMVITYFLTIKSLQKEATLCVSDLGTRAKLASFSFLPQSSLSSEKLFQRSIHREPGSYTGRRTMQSISNEQKACKVLGIVFSLFVVMWCPFFITNIMAVICKESCNEDVIGALLNVFVWIGYLSSAVNPLVYTLFNKTYRSAFSRYIQCQYKENKKPLQLILVNTIPALAYKSSQLQMGQKKNSKQDAKTTDNDCSMVALGKQHSEDASKDNSDGVNEKVSCV</sequence>